<evidence type="ECO:0000250" key="1"/>
<evidence type="ECO:0000255" key="2"/>
<evidence type="ECO:0000305" key="3"/>
<reference key="1">
    <citation type="journal article" date="2003" name="J. Mol. Evol.">
        <title>Molecular phylogeny and evolution of the plant-specific seven-transmembrane MLO family.</title>
        <authorList>
            <person name="Devoto A."/>
            <person name="Hartmann H.A."/>
            <person name="Piffanelli P."/>
            <person name="Elliott C."/>
            <person name="Simmons C."/>
            <person name="Taramino G."/>
            <person name="Goh C.-S."/>
            <person name="Cohen F.E."/>
            <person name="Emerson B.C."/>
            <person name="Schulze-Lefert P."/>
            <person name="Panstruga R."/>
        </authorList>
    </citation>
    <scope>NUCLEOTIDE SEQUENCE [MRNA]</scope>
</reference>
<reference key="2">
    <citation type="journal article" date="2000" name="Nature">
        <title>Sequence and analysis of chromosome 1 of the plant Arabidopsis thaliana.</title>
        <authorList>
            <person name="Theologis A."/>
            <person name="Ecker J.R."/>
            <person name="Palm C.J."/>
            <person name="Federspiel N.A."/>
            <person name="Kaul S."/>
            <person name="White O."/>
            <person name="Alonso J."/>
            <person name="Altafi H."/>
            <person name="Araujo R."/>
            <person name="Bowman C.L."/>
            <person name="Brooks S.Y."/>
            <person name="Buehler E."/>
            <person name="Chan A."/>
            <person name="Chao Q."/>
            <person name="Chen H."/>
            <person name="Cheuk R.F."/>
            <person name="Chin C.W."/>
            <person name="Chung M.K."/>
            <person name="Conn L."/>
            <person name="Conway A.B."/>
            <person name="Conway A.R."/>
            <person name="Creasy T.H."/>
            <person name="Dewar K."/>
            <person name="Dunn P."/>
            <person name="Etgu P."/>
            <person name="Feldblyum T.V."/>
            <person name="Feng J.-D."/>
            <person name="Fong B."/>
            <person name="Fujii C.Y."/>
            <person name="Gill J.E."/>
            <person name="Goldsmith A.D."/>
            <person name="Haas B."/>
            <person name="Hansen N.F."/>
            <person name="Hughes B."/>
            <person name="Huizar L."/>
            <person name="Hunter J.L."/>
            <person name="Jenkins J."/>
            <person name="Johnson-Hopson C."/>
            <person name="Khan S."/>
            <person name="Khaykin E."/>
            <person name="Kim C.J."/>
            <person name="Koo H.L."/>
            <person name="Kremenetskaia I."/>
            <person name="Kurtz D.B."/>
            <person name="Kwan A."/>
            <person name="Lam B."/>
            <person name="Langin-Hooper S."/>
            <person name="Lee A."/>
            <person name="Lee J.M."/>
            <person name="Lenz C.A."/>
            <person name="Li J.H."/>
            <person name="Li Y.-P."/>
            <person name="Lin X."/>
            <person name="Liu S.X."/>
            <person name="Liu Z.A."/>
            <person name="Luros J.S."/>
            <person name="Maiti R."/>
            <person name="Marziali A."/>
            <person name="Militscher J."/>
            <person name="Miranda M."/>
            <person name="Nguyen M."/>
            <person name="Nierman W.C."/>
            <person name="Osborne B.I."/>
            <person name="Pai G."/>
            <person name="Peterson J."/>
            <person name="Pham P.K."/>
            <person name="Rizzo M."/>
            <person name="Rooney T."/>
            <person name="Rowley D."/>
            <person name="Sakano H."/>
            <person name="Salzberg S.L."/>
            <person name="Schwartz J.R."/>
            <person name="Shinn P."/>
            <person name="Southwick A.M."/>
            <person name="Sun H."/>
            <person name="Tallon L.J."/>
            <person name="Tambunga G."/>
            <person name="Toriumi M.J."/>
            <person name="Town C.D."/>
            <person name="Utterback T."/>
            <person name="Van Aken S."/>
            <person name="Vaysberg M."/>
            <person name="Vysotskaia V.S."/>
            <person name="Walker M."/>
            <person name="Wu D."/>
            <person name="Yu G."/>
            <person name="Fraser C.M."/>
            <person name="Venter J.C."/>
            <person name="Davis R.W."/>
        </authorList>
    </citation>
    <scope>NUCLEOTIDE SEQUENCE [LARGE SCALE GENOMIC DNA]</scope>
    <source>
        <strain>cv. Columbia</strain>
    </source>
</reference>
<reference key="3">
    <citation type="journal article" date="2017" name="Plant J.">
        <title>Araport11: a complete reannotation of the Arabidopsis thaliana reference genome.</title>
        <authorList>
            <person name="Cheng C.Y."/>
            <person name="Krishnakumar V."/>
            <person name="Chan A.P."/>
            <person name="Thibaud-Nissen F."/>
            <person name="Schobel S."/>
            <person name="Town C.D."/>
        </authorList>
    </citation>
    <scope>GENOME REANNOTATION</scope>
    <source>
        <strain>cv. Columbia</strain>
    </source>
</reference>
<name>MLO14_ARATH</name>
<comment type="function">
    <text evidence="1">May be involved in modulation of pathogen defense and leaf cell death. Activity seems to be regulated by Ca(2+)-dependent calmodulin binding and seems not to require heterotrimeric G proteins (By similarity).</text>
</comment>
<comment type="subcellular location">
    <subcellularLocation>
        <location evidence="1">Membrane</location>
        <topology evidence="1">Multi-pass membrane protein</topology>
    </subcellularLocation>
</comment>
<comment type="domain">
    <text evidence="1">The C-terminus contains a calmodulin-binding domain, which binds calmodulin in a calcium-dependent fashion.</text>
</comment>
<comment type="similarity">
    <text evidence="3">Belongs to the MLO family.</text>
</comment>
<comment type="sequence caution" evidence="3">
    <conflict type="erroneous gene model prediction">
        <sequence resource="EMBL-CDS" id="AAF87028"/>
    </conflict>
</comment>
<keyword id="KW-0112">Calmodulin-binding</keyword>
<keyword id="KW-0472">Membrane</keyword>
<keyword id="KW-0568">Pathogenesis-related protein</keyword>
<keyword id="KW-0611">Plant defense</keyword>
<keyword id="KW-1185">Reference proteome</keyword>
<keyword id="KW-0812">Transmembrane</keyword>
<keyword id="KW-1133">Transmembrane helix</keyword>
<sequence>MREETEPSERTLGLTPTWSVATVLTIFVFVSLIVERSIHRLSNWLQKTKRKPLFAALEKMKEELMLLGFISLLLTATSSTIANICVSSSFHNDRFVPCTPSEINEELESTISTVKRTQLTRSLFLHTLRRRLSGIGEDTCSEGHEPFLSYEGMEQLHRFIFIMAVTHVTYSCLTMLLAIVKIHRWRIWEDEVHMDRNDCLTVVAREKIFRRQTTFVQYHTSAPLVKNRLLIWVICFFRQFGHSVVRSDYLTLRKGFIMNHHLTLTYDFHSYMIRSMEEEFQKIVGVSGPLWGFVVGFMLFNIKGSNLYFWLAIIPITLVLLVGAKLQHVIATLALENASITEYASGIKLRPRDELFWFKKPELLLSLIHFIQFQNAFELASFFWFWWQFGYNSCFLRNHLLVYLRLILGFSGQFLCSYSTLPLYALVTQMGTNYKAALLPQRVRETINGWGKATRRKRRHGLYGDDSTIRTETSTIASVDEYNDQVLDVSETSPVQDNELELQLIRGACGNSSSVETPILRPCASISSTTFSRLQTETTDSLSRSSSLPMRREC</sequence>
<accession>Q94KB1</accession>
<accession>Q9LQY2</accession>
<proteinExistence type="evidence at transcript level"/>
<gene>
    <name type="primary">MLO14</name>
    <name type="ordered locus">At1g26700</name>
    <name type="ORF">T24P13.8</name>
</gene>
<dbReference type="EMBL" id="AF369575">
    <property type="protein sequence ID" value="AAK53807.1"/>
    <property type="molecule type" value="mRNA"/>
</dbReference>
<dbReference type="EMBL" id="AC006535">
    <property type="protein sequence ID" value="AAF87028.1"/>
    <property type="status" value="ALT_SEQ"/>
    <property type="molecule type" value="Genomic_DNA"/>
</dbReference>
<dbReference type="EMBL" id="CP002684">
    <property type="protein sequence ID" value="AEE30722.1"/>
    <property type="molecule type" value="Genomic_DNA"/>
</dbReference>
<dbReference type="EMBL" id="CP002684">
    <property type="protein sequence ID" value="ANM57918.1"/>
    <property type="molecule type" value="Genomic_DNA"/>
</dbReference>
<dbReference type="PIR" id="H86393">
    <property type="entry name" value="H86393"/>
</dbReference>
<dbReference type="RefSeq" id="NP_001319086.1">
    <property type="nucleotide sequence ID" value="NM_001332726.1"/>
</dbReference>
<dbReference type="RefSeq" id="NP_564257.1">
    <property type="nucleotide sequence ID" value="NM_102433.1"/>
</dbReference>
<dbReference type="BioGRID" id="24447">
    <property type="interactions" value="8"/>
</dbReference>
<dbReference type="IntAct" id="Q94KB1">
    <property type="interactions" value="8"/>
</dbReference>
<dbReference type="STRING" id="3702.Q94KB1"/>
<dbReference type="PaxDb" id="3702-AT1G26700.1"/>
<dbReference type="EnsemblPlants" id="AT1G26700.1">
    <property type="protein sequence ID" value="AT1G26700.1"/>
    <property type="gene ID" value="AT1G26700"/>
</dbReference>
<dbReference type="EnsemblPlants" id="AT1G26700.2">
    <property type="protein sequence ID" value="AT1G26700.2"/>
    <property type="gene ID" value="AT1G26700"/>
</dbReference>
<dbReference type="GeneID" id="839211"/>
<dbReference type="Gramene" id="AT1G26700.1">
    <property type="protein sequence ID" value="AT1G26700.1"/>
    <property type="gene ID" value="AT1G26700"/>
</dbReference>
<dbReference type="Gramene" id="AT1G26700.2">
    <property type="protein sequence ID" value="AT1G26700.2"/>
    <property type="gene ID" value="AT1G26700"/>
</dbReference>
<dbReference type="KEGG" id="ath:AT1G26700"/>
<dbReference type="Araport" id="AT1G26700"/>
<dbReference type="TAIR" id="AT1G26700">
    <property type="gene designation" value="MLO14"/>
</dbReference>
<dbReference type="eggNOG" id="KOG0017">
    <property type="taxonomic scope" value="Eukaryota"/>
</dbReference>
<dbReference type="HOGENOM" id="CLU_024720_2_1_1"/>
<dbReference type="InParanoid" id="Q94KB1"/>
<dbReference type="OMA" id="RLLIWVI"/>
<dbReference type="PhylomeDB" id="Q94KB1"/>
<dbReference type="PRO" id="PR:Q94KB1"/>
<dbReference type="Proteomes" id="UP000006548">
    <property type="component" value="Chromosome 1"/>
</dbReference>
<dbReference type="ExpressionAtlas" id="Q94KB1">
    <property type="expression patterns" value="baseline and differential"/>
</dbReference>
<dbReference type="GO" id="GO:0016020">
    <property type="term" value="C:membrane"/>
    <property type="evidence" value="ECO:0007669"/>
    <property type="project" value="UniProtKB-SubCell"/>
</dbReference>
<dbReference type="GO" id="GO:0005516">
    <property type="term" value="F:calmodulin binding"/>
    <property type="evidence" value="ECO:0007669"/>
    <property type="project" value="UniProtKB-KW"/>
</dbReference>
<dbReference type="GO" id="GO:0006952">
    <property type="term" value="P:defense response"/>
    <property type="evidence" value="ECO:0007669"/>
    <property type="project" value="UniProtKB-KW"/>
</dbReference>
<dbReference type="InterPro" id="IPR004326">
    <property type="entry name" value="Mlo"/>
</dbReference>
<dbReference type="PANTHER" id="PTHR31942">
    <property type="entry name" value="MLO-LIKE PROTEIN 1"/>
    <property type="match status" value="1"/>
</dbReference>
<dbReference type="PANTHER" id="PTHR31942:SF77">
    <property type="entry name" value="MLO-LIKE PROTEIN 14"/>
    <property type="match status" value="1"/>
</dbReference>
<dbReference type="Pfam" id="PF03094">
    <property type="entry name" value="Mlo"/>
    <property type="match status" value="1"/>
</dbReference>
<protein>
    <recommendedName>
        <fullName>MLO-like protein 14</fullName>
        <shortName>AtMlo14</shortName>
    </recommendedName>
</protein>
<organism>
    <name type="scientific">Arabidopsis thaliana</name>
    <name type="common">Mouse-ear cress</name>
    <dbReference type="NCBI Taxonomy" id="3702"/>
    <lineage>
        <taxon>Eukaryota</taxon>
        <taxon>Viridiplantae</taxon>
        <taxon>Streptophyta</taxon>
        <taxon>Embryophyta</taxon>
        <taxon>Tracheophyta</taxon>
        <taxon>Spermatophyta</taxon>
        <taxon>Magnoliopsida</taxon>
        <taxon>eudicotyledons</taxon>
        <taxon>Gunneridae</taxon>
        <taxon>Pentapetalae</taxon>
        <taxon>rosids</taxon>
        <taxon>malvids</taxon>
        <taxon>Brassicales</taxon>
        <taxon>Brassicaceae</taxon>
        <taxon>Camelineae</taxon>
        <taxon>Arabidopsis</taxon>
    </lineage>
</organism>
<feature type="chain" id="PRO_0000209944" description="MLO-like protein 14">
    <location>
        <begin position="1"/>
        <end position="554"/>
    </location>
</feature>
<feature type="topological domain" description="Extracellular" evidence="2">
    <location>
        <begin position="1"/>
        <end position="13"/>
    </location>
</feature>
<feature type="transmembrane region" description="Helical; Name=1" evidence="2">
    <location>
        <begin position="14"/>
        <end position="34"/>
    </location>
</feature>
<feature type="topological domain" description="Cytoplasmic" evidence="2">
    <location>
        <begin position="35"/>
        <end position="63"/>
    </location>
</feature>
<feature type="transmembrane region" description="Helical; Name=2" evidence="2">
    <location>
        <begin position="64"/>
        <end position="84"/>
    </location>
</feature>
<feature type="topological domain" description="Extracellular" evidence="2">
    <location>
        <begin position="85"/>
        <end position="158"/>
    </location>
</feature>
<feature type="transmembrane region" description="Helical; Name=3" evidence="2">
    <location>
        <begin position="159"/>
        <end position="179"/>
    </location>
</feature>
<feature type="topological domain" description="Cytoplasmic" evidence="2">
    <location>
        <begin position="180"/>
        <end position="281"/>
    </location>
</feature>
<feature type="transmembrane region" description="Helical; Name=4" evidence="2">
    <location>
        <begin position="282"/>
        <end position="302"/>
    </location>
</feature>
<feature type="topological domain" description="Extracellular" evidence="2">
    <location>
        <position position="303"/>
    </location>
</feature>
<feature type="transmembrane region" description="Helical; Name=5" evidence="2">
    <location>
        <begin position="304"/>
        <end position="324"/>
    </location>
</feature>
<feature type="topological domain" description="Cytoplasmic" evidence="2">
    <location>
        <begin position="325"/>
        <end position="366"/>
    </location>
</feature>
<feature type="transmembrane region" description="Helical; Name=6" evidence="2">
    <location>
        <begin position="367"/>
        <end position="387"/>
    </location>
</feature>
<feature type="topological domain" description="Extracellular" evidence="2">
    <location>
        <begin position="388"/>
        <end position="406"/>
    </location>
</feature>
<feature type="transmembrane region" description="Helical; Name=7" evidence="2">
    <location>
        <begin position="407"/>
        <end position="427"/>
    </location>
</feature>
<feature type="topological domain" description="Cytoplasmic" evidence="2">
    <location>
        <begin position="428"/>
        <end position="554"/>
    </location>
</feature>
<feature type="region of interest" description="Calmodulin-binding">
    <location>
        <begin position="441"/>
        <end position="462"/>
    </location>
</feature>